<name>NUCL_HUMAN</name>
<comment type="function">
    <text evidence="6">Nucleolin is the major nucleolar protein of growing eukaryotic cells. It is found associated with intranucleolar chromatin and pre-ribosomal particles. It induces chromatin decondensation by binding to histone H1. It is thought to play a role in pre-rRNA transcription and ribosome assembly. May play a role in the process of transcriptional elongation. Binds RNA oligonucleotides with 5'-UUAGGG-3' repeats more tightly than the telomeric single-stranded DNA 5'-TTAGGG-3' repeats.</text>
</comment>
<comment type="subunit">
    <text evidence="3 6 7 8 9 10 11 12 13 14 15 16 17 18 19 20 21 22 23 24 25 26">Identified in a IGF2BP1-dependent mRNP granule complex containing untranslated mRNAs (PubMed:17289661). Component of the SWAP complex that consists of NPM1, NCL/nucleolin, PARP1 and SWAP70 (By similarity). Component of a complex which is at least composed of HTATSF1/Tat-SF1, the P-TEFb complex components CDK9 and CCNT1, RNA polymerase II, SUPT5H, and NCL/nucleolin (PubMed:10393184). Interacts with AICDA (By similarity). Interacts with APTX (PubMed:15044383). Interacts with C1QBP (PubMed:21536856). Interacts with ERBB4 (PubMed:20858735). Interacts (via C-terminus) with FMR1 isoform 6 (via N-terminus) (PubMed:24658146). Interacts with GZF1; this interaction is important for nucleolar localization of GZF1 (PubMed:17674968). Interacts with NSUN2 (PubMed:17215513). Interacts with NVL (PubMed:21474449). Interacts (via N-terminus domain) with SETX (PubMed:21700224). Interacts (via RRM1 and C-terminal RRM4/Arg/Gly-rich domains) with TERT; the interaction is important for nucleolar localization of TERT (PubMed:15371412). Interacts with WDR46 (PubMed:23848194). Interacts with ZFP36 (PubMed:20221403). Interacts with LRRC34 (By similarity). Interacts with RRP1B (PubMed:19710015). Interacts with HNRNPU; this interaction occurs during mitosis (PubMed:21242313). Interacts with RIOK1; RIOK1 recruits NCL to PRMT5 for symmetrically methylation (PubMed:21081503). Interacts with ZBTB7B (By similarity). Interacts with MDK; this interaction promotes NCL clustering and lateral movements of this complex into lipid rafts leading to MDK internalization (PubMed:12147681). Interacts with HDGF (isoform 1) (PubMed:26845719). Interacts with ALKBH2. Interacts with IGFBP5; this interaction is necessary for IGFBP5 localization to the nucleus (PubMed:26103640). Interacts with DDX24 (when ubiquitinated); this interaction may be important during ribosome biogenesis (PubMed:24980433).</text>
</comment>
<comment type="interaction">
    <interactant intactId="EBI-346967">
        <id>P19338</id>
    </interactant>
    <interactant intactId="EBI-1044254">
        <id>Q9Y6D6</id>
        <label>ARFGEF1</label>
    </interactant>
    <organismsDiffer>false</organismsDiffer>
    <experiments>5</experiments>
</comment>
<comment type="interaction">
    <interactant intactId="EBI-346967">
        <id>P19338</id>
    </interactant>
    <interactant intactId="EBI-743313">
        <id>P49407</id>
        <label>ARRB1</label>
    </interactant>
    <organismsDiffer>false</organismsDiffer>
    <experiments>3</experiments>
</comment>
<comment type="interaction">
    <interactant intactId="EBI-346967">
        <id>P19338</id>
    </interactant>
    <interactant intactId="EBI-714559">
        <id>P32121</id>
        <label>ARRB2</label>
    </interactant>
    <organismsDiffer>false</organismsDiffer>
    <experiments>3</experiments>
</comment>
<comment type="interaction">
    <interactant intactId="EBI-346967">
        <id>P19338</id>
    </interactant>
    <interactant intactId="EBI-2566375">
        <id>PRO_0000005794</id>
        <label>COL18A1</label>
        <dbReference type="UniProtKB" id="P39060"/>
    </interactant>
    <organismsDiffer>false</organismsDiffer>
    <experiments>12</experiments>
</comment>
<comment type="interaction">
    <interactant intactId="EBI-346967">
        <id>P19338</id>
    </interactant>
    <interactant intactId="EBI-347804">
        <id>P68400</id>
        <label>CSNK2A1</label>
    </interactant>
    <organismsDiffer>false</organismsDiffer>
    <experiments>2</experiments>
</comment>
<comment type="interaction">
    <interactant intactId="EBI-346967">
        <id>P19338</id>
    </interactant>
    <interactant intactId="EBI-5327611">
        <id>P16401</id>
        <label>H1-5</label>
    </interactant>
    <organismsDiffer>false</organismsDiffer>
    <experiments>2</experiments>
</comment>
<comment type="interaction">
    <interactant intactId="EBI-346967">
        <id>P19338</id>
    </interactant>
    <interactant intactId="EBI-389668">
        <id>Q00987</id>
        <label>MDM2</label>
    </interactant>
    <organismsDiffer>false</organismsDiffer>
    <experiments>8</experiments>
</comment>
<comment type="interaction">
    <interactant intactId="EBI-346967">
        <id>P19338</id>
    </interactant>
    <interactant intactId="EBI-350338">
        <id>P35579</id>
        <label>MYH9</label>
    </interactant>
    <organismsDiffer>false</organismsDiffer>
    <experiments>3</experiments>
</comment>
<comment type="interaction">
    <interactant intactId="EBI-346967">
        <id>P19338</id>
    </interactant>
    <interactant intactId="EBI-346967">
        <id>P19338</id>
        <label>NCL</label>
    </interactant>
    <organismsDiffer>false</organismsDiffer>
    <experiments>5</experiments>
</comment>
<comment type="interaction">
    <interactant intactId="EBI-346967">
        <id>P19338</id>
    </interactant>
    <interactant intactId="EBI-924893">
        <id>Q9UQ80</id>
        <label>PA2G4</label>
    </interactant>
    <organismsDiffer>false</organismsDiffer>
    <experiments>2</experiments>
</comment>
<comment type="interaction">
    <interactant intactId="EBI-346967">
        <id>P19338</id>
    </interactant>
    <interactant intactId="EBI-2683132">
        <id>Q06710</id>
        <label>PAX8</label>
    </interactant>
    <organismsDiffer>false</organismsDiffer>
    <experiments>2</experiments>
</comment>
<comment type="interaction">
    <interactant intactId="EBI-346967">
        <id>P19338</id>
    </interactant>
    <interactant intactId="EBI-446668">
        <id>P61586</id>
        <label>RHOA</label>
    </interactant>
    <organismsDiffer>false</organismsDiffer>
    <experiments>3</experiments>
</comment>
<comment type="interaction">
    <interactant intactId="EBI-346967">
        <id>P19338</id>
    </interactant>
    <interactant intactId="EBI-366083">
        <id>P04637</id>
        <label>TP53</label>
    </interactant>
    <organismsDiffer>false</organismsDiffer>
    <experiments>2</experiments>
</comment>
<comment type="interaction">
    <interactant intactId="EBI-346967">
        <id>P19338</id>
    </interactant>
    <interactant intactId="EBI-347088">
        <id>P63104</id>
        <label>YWHAZ</label>
    </interactant>
    <organismsDiffer>false</organismsDiffer>
    <experiments>2</experiments>
</comment>
<comment type="interaction">
    <interactant intactId="EBI-346967">
        <id>P19338</id>
    </interactant>
    <interactant intactId="EBI-8308696">
        <id>Q9CR42</id>
        <label>Ankrd1</label>
    </interactant>
    <organismsDiffer>true</organismsDiffer>
    <experiments>2</experiments>
</comment>
<comment type="interaction">
    <interactant intactId="EBI-346967">
        <id>P19338</id>
    </interactant>
    <interactant intactId="EBI-1185167">
        <id>Q8AZK7</id>
        <label>EBNA-LP</label>
    </interactant>
    <organismsDiffer>true</organismsDiffer>
    <experiments>2</experiments>
</comment>
<comment type="interaction">
    <interactant intactId="EBI-346967">
        <id>P19338</id>
    </interactant>
    <interactant intactId="EBI-6904388">
        <id>PRO_0000037577</id>
        <dbReference type="UniProtKB" id="P27958"/>
    </interactant>
    <organismsDiffer>true</organismsDiffer>
    <experiments>4</experiments>
</comment>
<comment type="subcellular location">
    <subcellularLocation>
        <location evidence="25">Nucleus</location>
        <location evidence="25">Nucleolus</location>
    </subcellularLocation>
    <subcellularLocation>
        <location>Cytoplasm</location>
    </subcellularLocation>
    <text>Localized in cytoplasmic mRNP granules containing untranslated mRNAs.</text>
</comment>
<comment type="PTM">
    <text evidence="1">Some glutamate residues are glycylated by TTLL8. This modification occurs exclusively on glutamate residues and results in a glycine chain on the gamma-carboxyl group (By similarity).</text>
</comment>
<comment type="PTM">
    <text evidence="16">Symmetrically methylated by PRMT5.</text>
</comment>
<comment type="sequence caution" evidence="28">
    <conflict type="miscellaneous discrepancy">
        <sequence resource="EMBL-CDS" id="BAC03738"/>
    </conflict>
    <text>Unlikely isoform. Aberrant splice sites.</text>
</comment>
<protein>
    <recommendedName>
        <fullName>Nucleolin</fullName>
    </recommendedName>
    <alternativeName>
        <fullName>Protein C23</fullName>
    </alternativeName>
</protein>
<sequence>MVKLAKAGKNQGDPKKMAPPPKEVEEDSEDEEMSEDEEDDSSGEEVVIPQKKGKKAAATSAKKVVVSPTKKVAVATPAKKAAVTPGKKAAATPAKKTVTPAKAVTTPGKKGATPGKALVATPGKKGAAIPAKGAKNGKNAKKEDSDEEEDDDSEEDEEDDEDEDEDEDEIEPAAMKAAAAAPASEDEDDEDDEDDEDDDDDEEDDSEEEAMETTPAKGKKAAKVVPVKAKNVAEDEDEEEDDEDEDDDDDEDDEDDDDEDDEEEEEEEEEEPVKEAPGKRKKEMAKQKAAPEAKKQKVEGTEPTTAFNLFVGNLNFNKSAPELKTGISDVFAKNDLAVVDVRIGMTRKFGYVDFESAEDLEKALELTGLKVFGNEIKLEKPKGKDSKKERDARTLLAKNLPYKVTQDELKEVFEDAAEIRLVSKDGKSKGIAYIEFKTEADAEKTFEEKQGTEIDGRSISLYYTGEKGQNQDYRGGKNSTWSGESKTLVLSNLSYSATEETLQEVFEKATFIKVPQNQNGKSKGYAFIEFASFEDAKEALNSCNKREIEGRAIRLELQGPRGSPNARSQPSKTLFVKGLSEDTTEETLKESFDGSVRARIVTDRETGSSKGFGFVDFNSEEDAKAAKEAMEDGEIDGNKVTLDWAKPKGEGGFGGRGGGRGGFGGRGGGRGGRGGFGGRGRGGFGGRGGFRGGRGGGGDHKPQGKKTKFE</sequence>
<feature type="initiator methionine" description="Removed" evidence="27">
    <location>
        <position position="1"/>
    </location>
</feature>
<feature type="chain" id="PRO_0000081691" description="Nucleolin">
    <location>
        <begin position="2"/>
        <end position="710"/>
    </location>
</feature>
<feature type="repeat" description="1">
    <location>
        <begin position="58"/>
        <end position="65"/>
    </location>
</feature>
<feature type="repeat" description="2">
    <location>
        <begin position="75"/>
        <end position="82"/>
    </location>
</feature>
<feature type="repeat" description="3">
    <location>
        <begin position="83"/>
        <end position="90"/>
    </location>
</feature>
<feature type="repeat" description="4">
    <location>
        <begin position="91"/>
        <end position="98"/>
    </location>
</feature>
<feature type="repeat" description="5; truncated">
    <location>
        <begin position="99"/>
        <end position="104"/>
    </location>
</feature>
<feature type="repeat" description="6">
    <location>
        <begin position="105"/>
        <end position="112"/>
    </location>
</feature>
<feature type="repeat" description="7">
    <location>
        <begin position="120"/>
        <end position="127"/>
    </location>
</feature>
<feature type="repeat" description="8">
    <location>
        <begin position="128"/>
        <end position="135"/>
    </location>
</feature>
<feature type="domain" description="RRM 1" evidence="4">
    <location>
        <begin position="307"/>
        <end position="383"/>
    </location>
</feature>
<feature type="domain" description="RRM 2" evidence="4">
    <location>
        <begin position="393"/>
        <end position="466"/>
    </location>
</feature>
<feature type="domain" description="RRM 3" evidence="4">
    <location>
        <begin position="486"/>
        <end position="560"/>
    </location>
</feature>
<feature type="domain" description="RRM 4" evidence="4">
    <location>
        <begin position="572"/>
        <end position="647"/>
    </location>
</feature>
<feature type="region of interest" description="Disordered" evidence="5">
    <location>
        <begin position="1"/>
        <end position="303"/>
    </location>
</feature>
<feature type="region of interest" description="8 X 8 AA tandem repeats of X-T-P-X-K-K-X-X">
    <location>
        <begin position="58"/>
        <end position="135"/>
    </location>
</feature>
<feature type="region of interest" description="Disordered" evidence="5">
    <location>
        <begin position="640"/>
        <end position="710"/>
    </location>
</feature>
<feature type="compositionally biased region" description="Acidic residues" evidence="5">
    <location>
        <begin position="24"/>
        <end position="43"/>
    </location>
</feature>
<feature type="compositionally biased region" description="Low complexity" evidence="5">
    <location>
        <begin position="56"/>
        <end position="107"/>
    </location>
</feature>
<feature type="compositionally biased region" description="Low complexity" evidence="5">
    <location>
        <begin position="122"/>
        <end position="137"/>
    </location>
</feature>
<feature type="compositionally biased region" description="Acidic residues" evidence="5">
    <location>
        <begin position="145"/>
        <end position="171"/>
    </location>
</feature>
<feature type="compositionally biased region" description="Low complexity" evidence="5">
    <location>
        <begin position="172"/>
        <end position="183"/>
    </location>
</feature>
<feature type="compositionally biased region" description="Acidic residues" evidence="5">
    <location>
        <begin position="184"/>
        <end position="211"/>
    </location>
</feature>
<feature type="compositionally biased region" description="Acidic residues" evidence="5">
    <location>
        <begin position="234"/>
        <end position="272"/>
    </location>
</feature>
<feature type="compositionally biased region" description="Basic and acidic residues" evidence="5">
    <location>
        <begin position="273"/>
        <end position="300"/>
    </location>
</feature>
<feature type="compositionally biased region" description="Gly residues" evidence="5">
    <location>
        <begin position="650"/>
        <end position="696"/>
    </location>
</feature>
<feature type="compositionally biased region" description="Basic and acidic residues" evidence="5">
    <location>
        <begin position="697"/>
        <end position="710"/>
    </location>
</feature>
<feature type="modified residue" description="N6-acetyllysine" evidence="34">
    <location>
        <position position="9"/>
    </location>
</feature>
<feature type="modified residue" description="N6-acetyllysine" evidence="3">
    <location>
        <position position="15"/>
    </location>
</feature>
<feature type="modified residue" description="N6-acetyllysine" evidence="3">
    <location>
        <position position="16"/>
    </location>
</feature>
<feature type="modified residue" description="Phosphoserine" evidence="35 36">
    <location>
        <position position="28"/>
    </location>
</feature>
<feature type="modified residue" description="Phosphoserine" evidence="35 36">
    <location>
        <position position="34"/>
    </location>
</feature>
<feature type="modified residue" description="Phosphoserine" evidence="39">
    <location>
        <position position="41"/>
    </location>
</feature>
<feature type="modified residue" description="Phosphoserine" evidence="39">
    <location>
        <position position="42"/>
    </location>
</feature>
<feature type="modified residue" description="Phosphoserine" evidence="33 36 37 38 39">
    <location>
        <position position="67"/>
    </location>
</feature>
<feature type="modified residue" description="Phosphothreonine" evidence="33 36 37">
    <location>
        <position position="69"/>
    </location>
</feature>
<feature type="modified residue" description="Phosphothreonine" evidence="32 36 38">
    <location>
        <position position="76"/>
    </location>
</feature>
<feature type="modified residue" description="Phosphothreonine" evidence="36">
    <location>
        <position position="84"/>
    </location>
</feature>
<feature type="modified residue" description="Phosphothreonine" evidence="36">
    <location>
        <position position="92"/>
    </location>
</feature>
<feature type="modified residue" description="N6-acetyllysine" evidence="3">
    <location>
        <position position="96"/>
    </location>
</feature>
<feature type="modified residue" description="Phosphothreonine" evidence="36">
    <location>
        <position position="99"/>
    </location>
</feature>
<feature type="modified residue" description="N6-acetyllysine" evidence="34">
    <location>
        <position position="102"/>
    </location>
</feature>
<feature type="modified residue" description="Phosphothreonine" evidence="36">
    <location>
        <position position="106"/>
    </location>
</feature>
<feature type="modified residue" description="N6-acetyllysine" evidence="3">
    <location>
        <position position="109"/>
    </location>
</feature>
<feature type="modified residue" description="Phosphothreonine" evidence="36">
    <location>
        <position position="113"/>
    </location>
</feature>
<feature type="modified residue" description="N6-acetyllysine" evidence="34">
    <location>
        <position position="116"/>
    </location>
</feature>
<feature type="modified residue" description="Phosphothreonine" evidence="32 36 38">
    <location>
        <position position="121"/>
    </location>
</feature>
<feature type="modified residue" description="N6-acetyllysine" evidence="34">
    <location>
        <position position="124"/>
    </location>
</feature>
<feature type="modified residue" description="Phosphoserine" evidence="30 31 36 38">
    <location>
        <position position="145"/>
    </location>
</feature>
<feature type="modified residue" description="Phosphoserine" evidence="30 31 38">
    <location>
        <position position="153"/>
    </location>
</feature>
<feature type="modified residue" description="Phosphoserine" evidence="31 33 38 39">
    <location>
        <position position="184"/>
    </location>
</feature>
<feature type="modified residue" description="Phosphoserine" evidence="31 33 38">
    <location>
        <position position="206"/>
    </location>
</feature>
<feature type="modified residue" description="Phosphothreonine" evidence="33">
    <location>
        <position position="214"/>
    </location>
</feature>
<feature type="modified residue" description="Phosphothreonine" evidence="35">
    <location>
        <position position="301"/>
    </location>
</feature>
<feature type="modified residue" description="N6-acetyllysine" evidence="34">
    <location>
        <position position="318"/>
    </location>
</feature>
<feature type="modified residue" description="N6-acetyllysine" evidence="3">
    <location>
        <position position="348"/>
    </location>
</feature>
<feature type="modified residue" description="Phosphoserine" evidence="38">
    <location>
        <position position="356"/>
    </location>
</feature>
<feature type="modified residue" description="Phosphothreonine" evidence="38">
    <location>
        <position position="367"/>
    </location>
</feature>
<feature type="modified residue" description="N6-acetyllysine; alternate" evidence="34">
    <location>
        <position position="377"/>
    </location>
</feature>
<feature type="modified residue" description="N6-acetyllysine" evidence="34">
    <location>
        <position position="398"/>
    </location>
</feature>
<feature type="modified residue" description="N6-acetyllysine" evidence="34">
    <location>
        <position position="403"/>
    </location>
</feature>
<feature type="modified residue" description="Phosphothreonine" evidence="38">
    <location>
        <position position="405"/>
    </location>
</feature>
<feature type="modified residue" description="N6-acetyllysine" evidence="3">
    <location>
        <position position="427"/>
    </location>
</feature>
<feature type="modified residue" description="N6-acetyllysine" evidence="3">
    <location>
        <position position="444"/>
    </location>
</feature>
<feature type="modified residue" description="Phosphoserine" evidence="38">
    <location>
        <position position="458"/>
    </location>
</feature>
<feature type="modified residue" description="Phosphoserine" evidence="38">
    <location>
        <position position="460"/>
    </location>
</feature>
<feature type="modified residue" description="N6-acetyllysine" evidence="3">
    <location>
        <position position="467"/>
    </location>
</feature>
<feature type="modified residue" description="N6-acetyllysine" evidence="3">
    <location>
        <position position="477"/>
    </location>
</feature>
<feature type="modified residue" description="N6-acetyllysine; alternate" evidence="34">
    <location>
        <position position="513"/>
    </location>
</feature>
<feature type="modified residue" description="N6-acetyllysine" evidence="3">
    <location>
        <position position="521"/>
    </location>
</feature>
<feature type="modified residue" description="Phosphoserine" evidence="30 36 37 38">
    <location>
        <position position="563"/>
    </location>
</feature>
<feature type="modified residue" description="N6-acetyllysine" evidence="34">
    <location>
        <position position="572"/>
    </location>
</feature>
<feature type="modified residue" description="N6-acetyllysine; alternate" evidence="34">
    <location>
        <position position="577"/>
    </location>
</feature>
<feature type="modified residue" description="Phosphoserine" evidence="29 37 38 39">
    <location>
        <position position="580"/>
    </location>
</feature>
<feature type="modified residue" description="Phosphoserine" evidence="39">
    <location>
        <position position="591"/>
    </location>
</feature>
<feature type="modified residue" description="Phosphoserine" evidence="36 37 38 39">
    <location>
        <position position="619"/>
    </location>
</feature>
<feature type="modified residue" description="N6-acetyllysine" evidence="34">
    <location>
        <position position="646"/>
    </location>
</feature>
<feature type="modified residue" description="Asymmetric dimethylarginine" evidence="2">
    <location>
        <position position="656"/>
    </location>
</feature>
<feature type="modified residue" description="Asymmetric dimethylarginine" evidence="2">
    <location>
        <position position="660"/>
    </location>
</feature>
<feature type="modified residue" description="Asymmetric dimethylarginine" evidence="2">
    <location>
        <position position="666"/>
    </location>
</feature>
<feature type="modified residue" description="Asymmetric dimethylarginine" evidence="2">
    <location>
        <position position="670"/>
    </location>
</feature>
<feature type="modified residue" description="Asymmetric dimethylarginine" evidence="2">
    <location>
        <position position="673"/>
    </location>
</feature>
<feature type="modified residue" description="Asymmetric dimethylarginine" evidence="2">
    <location>
        <position position="679"/>
    </location>
</feature>
<feature type="modified residue" description="Asymmetric dimethylarginine" evidence="2">
    <location>
        <position position="681"/>
    </location>
</feature>
<feature type="modified residue" description="Asymmetric dimethylarginine" evidence="2">
    <location>
        <position position="687"/>
    </location>
</feature>
<feature type="modified residue" description="Asymmetric dimethylarginine" evidence="2">
    <location>
        <position position="691"/>
    </location>
</feature>
<feature type="modified residue" description="Asymmetric dimethylarginine; alternate" evidence="2">
    <location>
        <position position="694"/>
    </location>
</feature>
<feature type="modified residue" description="Omega-N-methylarginine; alternate" evidence="3">
    <location>
        <position position="694"/>
    </location>
</feature>
<feature type="cross-link" description="Glycyl lysine isopeptide (Lys-Gly) (interchain with G-Cter in SUMO1); alternate" evidence="40">
    <location>
        <position position="297"/>
    </location>
</feature>
<feature type="cross-link" description="Glycyl lysine isopeptide (Lys-Gly) (interchain with G-Cter in SUMO2); alternate" evidence="40">
    <location>
        <position position="297"/>
    </location>
</feature>
<feature type="cross-link" description="Glycyl lysine isopeptide (Lys-Gly) (interchain with G-Cter in SUMO1); alternate" evidence="40">
    <location>
        <position position="324"/>
    </location>
</feature>
<feature type="cross-link" description="Glycyl lysine isopeptide (Lys-Gly) (interchain with G-Cter in SUMO2); alternate" evidence="41">
    <location>
        <position position="324"/>
    </location>
</feature>
<feature type="cross-link" description="Glycyl lysine isopeptide (Lys-Gly) (interchain with G-Cter in SUMO2)" evidence="41">
    <location>
        <position position="370"/>
    </location>
</feature>
<feature type="cross-link" description="Glycyl lysine isopeptide (Lys-Gly) (interchain with G-Cter in SUMO2); alternate" evidence="41">
    <location>
        <position position="377"/>
    </location>
</feature>
<feature type="cross-link" description="Glycyl lysine isopeptide (Lys-Gly) (interchain with G-Cter in SUMO2); alternate" evidence="41">
    <location>
        <position position="513"/>
    </location>
</feature>
<feature type="cross-link" description="Glycyl lysine isopeptide (Lys-Gly) (interchain with G-Cter in SUMO2); alternate" evidence="41">
    <location>
        <position position="577"/>
    </location>
</feature>
<feature type="cross-link" description="Glycyl lysine isopeptide (Lys-Gly) (interchain with G-Cter in SUMO1); alternate" evidence="40">
    <location>
        <position position="589"/>
    </location>
</feature>
<feature type="cross-link" description="Glycyl lysine isopeptide (Lys-Gly) (interchain with G-Cter in SUMO2); alternate" evidence="41">
    <location>
        <position position="589"/>
    </location>
</feature>
<feature type="cross-link" description="Glycyl lysine isopeptide (Lys-Gly) (interchain with G-Cter in SUMO2)" evidence="41">
    <location>
        <position position="624"/>
    </location>
</feature>
<feature type="sequence variant" id="VAR_046353" description="In dbSNP:rs11542691.">
    <original>P</original>
    <variation>L</variation>
    <location>
        <position position="68"/>
    </location>
</feature>
<feature type="sequence variant" id="VAR_046354" description="In dbSNP:rs11542687.">
    <original>P</original>
    <variation>L</variation>
    <location>
        <position position="122"/>
    </location>
</feature>
<feature type="sequence variant" id="VAR_046355" description="In dbSNP:rs11542689.">
    <original>A</original>
    <variation>V</variation>
    <location>
        <position position="174"/>
    </location>
</feature>
<feature type="sequence conflict" description="In Ref. 3; BAC03738." evidence="28" ref="3">
    <original>E</original>
    <variation>G</variation>
    <location>
        <position position="549"/>
    </location>
</feature>
<feature type="sequence conflict" description="In Ref. 2; AAA59954." evidence="28" ref="2">
    <location>
        <begin position="623"/>
        <end position="626"/>
    </location>
</feature>
<feature type="sequence conflict" description="In Ref. 1." evidence="28" ref="1">
    <location>
        <begin position="625"/>
        <end position="627"/>
    </location>
</feature>
<feature type="strand" evidence="44">
    <location>
        <begin position="304"/>
        <end position="306"/>
    </location>
</feature>
<feature type="strand" evidence="44">
    <location>
        <begin position="308"/>
        <end position="312"/>
    </location>
</feature>
<feature type="strand" evidence="44">
    <location>
        <begin position="316"/>
        <end position="318"/>
    </location>
</feature>
<feature type="helix" evidence="44">
    <location>
        <begin position="321"/>
        <end position="333"/>
    </location>
</feature>
<feature type="strand" evidence="44">
    <location>
        <begin position="338"/>
        <end position="343"/>
    </location>
</feature>
<feature type="strand" evidence="44">
    <location>
        <begin position="345"/>
        <end position="356"/>
    </location>
</feature>
<feature type="helix" evidence="44">
    <location>
        <begin position="357"/>
        <end position="365"/>
    </location>
</feature>
<feature type="strand" evidence="44">
    <location>
        <begin position="377"/>
        <end position="379"/>
    </location>
</feature>
<feature type="helix" evidence="44">
    <location>
        <begin position="388"/>
        <end position="391"/>
    </location>
</feature>
<feature type="strand" evidence="44">
    <location>
        <begin position="394"/>
        <end position="399"/>
    </location>
</feature>
<feature type="helix" evidence="44">
    <location>
        <begin position="406"/>
        <end position="413"/>
    </location>
</feature>
<feature type="strand" evidence="44">
    <location>
        <begin position="416"/>
        <end position="424"/>
    </location>
</feature>
<feature type="strand" evidence="44">
    <location>
        <begin position="427"/>
        <end position="435"/>
    </location>
</feature>
<feature type="helix" evidence="44">
    <location>
        <begin position="439"/>
        <end position="442"/>
    </location>
</feature>
<feature type="turn" evidence="44">
    <location>
        <begin position="443"/>
        <end position="445"/>
    </location>
</feature>
<feature type="helix" evidence="44">
    <location>
        <begin position="446"/>
        <end position="449"/>
    </location>
</feature>
<feature type="strand" evidence="44">
    <location>
        <begin position="460"/>
        <end position="463"/>
    </location>
</feature>
<feature type="strand" evidence="43">
    <location>
        <begin position="486"/>
        <end position="492"/>
    </location>
</feature>
<feature type="helix" evidence="43">
    <location>
        <begin position="499"/>
        <end position="505"/>
    </location>
</feature>
<feature type="strand" evidence="43">
    <location>
        <begin position="510"/>
        <end position="513"/>
    </location>
</feature>
<feature type="strand" evidence="43">
    <location>
        <begin position="518"/>
        <end position="520"/>
    </location>
</feature>
<feature type="strand" evidence="43">
    <location>
        <begin position="524"/>
        <end position="529"/>
    </location>
</feature>
<feature type="helix" evidence="43">
    <location>
        <begin position="533"/>
        <end position="542"/>
    </location>
</feature>
<feature type="strand" evidence="43">
    <location>
        <begin position="544"/>
        <end position="548"/>
    </location>
</feature>
<feature type="strand" evidence="43">
    <location>
        <begin position="551"/>
        <end position="557"/>
    </location>
</feature>
<feature type="strand" evidence="42">
    <location>
        <begin position="565"/>
        <end position="568"/>
    </location>
</feature>
<feature type="strand" evidence="42">
    <location>
        <begin position="572"/>
        <end position="577"/>
    </location>
</feature>
<feature type="helix" evidence="42">
    <location>
        <begin position="585"/>
        <end position="590"/>
    </location>
</feature>
<feature type="strand" evidence="42">
    <location>
        <begin position="596"/>
        <end position="602"/>
    </location>
</feature>
<feature type="strand" evidence="42">
    <location>
        <begin position="604"/>
        <end position="606"/>
    </location>
</feature>
<feature type="strand" evidence="42">
    <location>
        <begin position="608"/>
        <end position="616"/>
    </location>
</feature>
<feature type="helix" evidence="42">
    <location>
        <begin position="620"/>
        <end position="630"/>
    </location>
</feature>
<feature type="strand" evidence="42">
    <location>
        <begin position="641"/>
        <end position="644"/>
    </location>
</feature>
<feature type="strand" evidence="42">
    <location>
        <begin position="650"/>
        <end position="652"/>
    </location>
</feature>
<organism>
    <name type="scientific">Homo sapiens</name>
    <name type="common">Human</name>
    <dbReference type="NCBI Taxonomy" id="9606"/>
    <lineage>
        <taxon>Eukaryota</taxon>
        <taxon>Metazoa</taxon>
        <taxon>Chordata</taxon>
        <taxon>Craniata</taxon>
        <taxon>Vertebrata</taxon>
        <taxon>Euteleostomi</taxon>
        <taxon>Mammalia</taxon>
        <taxon>Eutheria</taxon>
        <taxon>Euarchontoglires</taxon>
        <taxon>Primates</taxon>
        <taxon>Haplorrhini</taxon>
        <taxon>Catarrhini</taxon>
        <taxon>Hominidae</taxon>
        <taxon>Homo</taxon>
    </lineage>
</organism>
<dbReference type="EMBL" id="M60858">
    <property type="protein sequence ID" value="AAA59954.1"/>
    <property type="molecule type" value="Genomic_DNA"/>
</dbReference>
<dbReference type="EMBL" id="AK091742">
    <property type="protein sequence ID" value="BAC03738.1"/>
    <property type="status" value="ALT_SEQ"/>
    <property type="molecule type" value="mRNA"/>
</dbReference>
<dbReference type="EMBL" id="AC017104">
    <property type="protein sequence ID" value="AAY24247.1"/>
    <property type="molecule type" value="Genomic_DNA"/>
</dbReference>
<dbReference type="CCDS" id="CCDS33397.1"/>
<dbReference type="PIR" id="A35804">
    <property type="entry name" value="A35804"/>
</dbReference>
<dbReference type="PIR" id="S53728">
    <property type="entry name" value="S53728"/>
</dbReference>
<dbReference type="RefSeq" id="NP_005372.2">
    <property type="nucleotide sequence ID" value="NM_005381.3"/>
</dbReference>
<dbReference type="PDB" id="2FC8">
    <property type="method" value="NMR"/>
    <property type="chains" value="A=564-652"/>
</dbReference>
<dbReference type="PDB" id="2FC9">
    <property type="method" value="NMR"/>
    <property type="chains" value="A=478-565"/>
</dbReference>
<dbReference type="PDB" id="2KRR">
    <property type="method" value="NMR"/>
    <property type="chains" value="A=300-466"/>
</dbReference>
<dbReference type="PDBsum" id="2FC8"/>
<dbReference type="PDBsum" id="2FC9"/>
<dbReference type="PDBsum" id="2KRR"/>
<dbReference type="SMR" id="P19338"/>
<dbReference type="BioGRID" id="110771">
    <property type="interactions" value="838"/>
</dbReference>
<dbReference type="CORUM" id="P19338"/>
<dbReference type="DIP" id="DIP-89N"/>
<dbReference type="ELM" id="P19338"/>
<dbReference type="FunCoup" id="P19338">
    <property type="interactions" value="2330"/>
</dbReference>
<dbReference type="IntAct" id="P19338">
    <property type="interactions" value="276"/>
</dbReference>
<dbReference type="MINT" id="P19338"/>
<dbReference type="STRING" id="9606.ENSP00000318195"/>
<dbReference type="ChEMBL" id="CHEMBL4295725"/>
<dbReference type="DrugBank" id="DB06638">
    <property type="generic name" value="Quarfloxin"/>
</dbReference>
<dbReference type="MoonProt" id="P19338"/>
<dbReference type="GlyCosmos" id="P19338">
    <property type="glycosylation" value="4 sites, 1 glycan"/>
</dbReference>
<dbReference type="GlyGen" id="P19338">
    <property type="glycosylation" value="11 sites, 3 N-linked glycans (1 site), 1 O-linked glycan (5 sites)"/>
</dbReference>
<dbReference type="iPTMnet" id="P19338"/>
<dbReference type="MetOSite" id="P19338"/>
<dbReference type="PhosphoSitePlus" id="P19338"/>
<dbReference type="SwissPalm" id="P19338"/>
<dbReference type="BioMuta" id="NCL"/>
<dbReference type="DMDM" id="90110781"/>
<dbReference type="CPTAC" id="CPTAC-936"/>
<dbReference type="jPOST" id="P19338"/>
<dbReference type="MassIVE" id="P19338"/>
<dbReference type="PaxDb" id="9606-ENSP00000318195"/>
<dbReference type="PeptideAtlas" id="P19338"/>
<dbReference type="ProteomicsDB" id="53647"/>
<dbReference type="Pumba" id="P19338"/>
<dbReference type="TopDownProteomics" id="P19338"/>
<dbReference type="ABCD" id="P19338">
    <property type="antibodies" value="5 sequenced antibodies"/>
</dbReference>
<dbReference type="Antibodypedia" id="3779">
    <property type="antibodies" value="918 antibodies from 42 providers"/>
</dbReference>
<dbReference type="DNASU" id="4691"/>
<dbReference type="Ensembl" id="ENST00000322723.9">
    <property type="protein sequence ID" value="ENSP00000318195.4"/>
    <property type="gene ID" value="ENSG00000115053.17"/>
</dbReference>
<dbReference type="GeneID" id="4691"/>
<dbReference type="KEGG" id="hsa:4691"/>
<dbReference type="MANE-Select" id="ENST00000322723.9">
    <property type="protein sequence ID" value="ENSP00000318195.4"/>
    <property type="RefSeq nucleotide sequence ID" value="NM_005381.3"/>
    <property type="RefSeq protein sequence ID" value="NP_005372.2"/>
</dbReference>
<dbReference type="UCSC" id="uc002vru.4">
    <property type="organism name" value="human"/>
</dbReference>
<dbReference type="AGR" id="HGNC:7667"/>
<dbReference type="CTD" id="4691"/>
<dbReference type="DisGeNET" id="4691"/>
<dbReference type="GeneCards" id="NCL"/>
<dbReference type="HGNC" id="HGNC:7667">
    <property type="gene designation" value="NCL"/>
</dbReference>
<dbReference type="HPA" id="ENSG00000115053">
    <property type="expression patterns" value="Low tissue specificity"/>
</dbReference>
<dbReference type="MIM" id="164035">
    <property type="type" value="gene"/>
</dbReference>
<dbReference type="neXtProt" id="NX_P19338"/>
<dbReference type="OpenTargets" id="ENSG00000115053"/>
<dbReference type="PharmGKB" id="PA31469"/>
<dbReference type="VEuPathDB" id="HostDB:ENSG00000115053"/>
<dbReference type="eggNOG" id="KOG0123">
    <property type="taxonomic scope" value="Eukaryota"/>
</dbReference>
<dbReference type="GeneTree" id="ENSGT00940000157437"/>
<dbReference type="HOGENOM" id="CLU_026300_1_0_1"/>
<dbReference type="InParanoid" id="P19338"/>
<dbReference type="OrthoDB" id="167718at2759"/>
<dbReference type="PAN-GO" id="P19338">
    <property type="GO annotations" value="3 GO annotations based on evolutionary models"/>
</dbReference>
<dbReference type="PhylomeDB" id="P19338"/>
<dbReference type="TreeFam" id="TF328499"/>
<dbReference type="PathwayCommons" id="P19338"/>
<dbReference type="Reactome" id="R-HSA-6791226">
    <property type="pathway name" value="Major pathway of rRNA processing in the nucleolus and cytosol"/>
</dbReference>
<dbReference type="Reactome" id="R-HSA-9820960">
    <property type="pathway name" value="Respiratory syncytial virus (RSV) attachment and entry"/>
</dbReference>
<dbReference type="SignaLink" id="P19338"/>
<dbReference type="SIGNOR" id="P19338"/>
<dbReference type="BioGRID-ORCS" id="4691">
    <property type="hits" value="716 hits in 1171 CRISPR screens"/>
</dbReference>
<dbReference type="CD-CODE" id="232F8A39">
    <property type="entry name" value="P-body"/>
</dbReference>
<dbReference type="CD-CODE" id="91857CE7">
    <property type="entry name" value="Nucleolus"/>
</dbReference>
<dbReference type="CD-CODE" id="B5F9EA4E">
    <property type="entry name" value="Synthetic Condensate 000369"/>
</dbReference>
<dbReference type="CD-CODE" id="DEE660B4">
    <property type="entry name" value="Stress granule"/>
</dbReference>
<dbReference type="CD-CODE" id="F85A2E29">
    <property type="entry name" value="IMP1 RNP granule"/>
</dbReference>
<dbReference type="ChiTaRS" id="NCL">
    <property type="organism name" value="human"/>
</dbReference>
<dbReference type="EvolutionaryTrace" id="P19338"/>
<dbReference type="GenomeRNAi" id="4691"/>
<dbReference type="Pharos" id="P19338">
    <property type="development level" value="Tbio"/>
</dbReference>
<dbReference type="PRO" id="PR:P19338"/>
<dbReference type="Proteomes" id="UP000005640">
    <property type="component" value="Chromosome 2"/>
</dbReference>
<dbReference type="RNAct" id="P19338">
    <property type="molecule type" value="protein"/>
</dbReference>
<dbReference type="Bgee" id="ENSG00000115053">
    <property type="expression patterns" value="Expressed in ventricular zone and 100 other cell types or tissues"/>
</dbReference>
<dbReference type="ExpressionAtlas" id="P19338">
    <property type="expression patterns" value="baseline and differential"/>
</dbReference>
<dbReference type="GO" id="GO:0005938">
    <property type="term" value="C:cell cortex"/>
    <property type="evidence" value="ECO:0000314"/>
    <property type="project" value="UniProtKB"/>
</dbReference>
<dbReference type="GO" id="GO:0005694">
    <property type="term" value="C:chromosome"/>
    <property type="evidence" value="ECO:0000314"/>
    <property type="project" value="HPA"/>
</dbReference>
<dbReference type="GO" id="GO:0001533">
    <property type="term" value="C:cornified envelope"/>
    <property type="evidence" value="ECO:0007669"/>
    <property type="project" value="Ensembl"/>
</dbReference>
<dbReference type="GO" id="GO:0036464">
    <property type="term" value="C:cytoplasmic ribonucleoprotein granule"/>
    <property type="evidence" value="ECO:0000314"/>
    <property type="project" value="ParkinsonsUK-UCL"/>
</dbReference>
<dbReference type="GO" id="GO:0070062">
    <property type="term" value="C:extracellular exosome"/>
    <property type="evidence" value="ECO:0007005"/>
    <property type="project" value="UniProtKB"/>
</dbReference>
<dbReference type="GO" id="GO:0160056">
    <property type="term" value="C:macropinosome membrane"/>
    <property type="evidence" value="ECO:0000304"/>
    <property type="project" value="Reactome"/>
</dbReference>
<dbReference type="GO" id="GO:0016020">
    <property type="term" value="C:membrane"/>
    <property type="evidence" value="ECO:0007005"/>
    <property type="project" value="UniProtKB"/>
</dbReference>
<dbReference type="GO" id="GO:0005730">
    <property type="term" value="C:nucleolus"/>
    <property type="evidence" value="ECO:0000314"/>
    <property type="project" value="UniProtKB"/>
</dbReference>
<dbReference type="GO" id="GO:0005654">
    <property type="term" value="C:nucleoplasm"/>
    <property type="evidence" value="ECO:0000314"/>
    <property type="project" value="CACAO"/>
</dbReference>
<dbReference type="GO" id="GO:0005634">
    <property type="term" value="C:nucleus"/>
    <property type="evidence" value="ECO:0000314"/>
    <property type="project" value="UniProtKB"/>
</dbReference>
<dbReference type="GO" id="GO:0005886">
    <property type="term" value="C:plasma membrane"/>
    <property type="evidence" value="ECO:0000304"/>
    <property type="project" value="Reactome"/>
</dbReference>
<dbReference type="GO" id="GO:1990904">
    <property type="term" value="C:ribonucleoprotein complex"/>
    <property type="evidence" value="ECO:0000314"/>
    <property type="project" value="UniProtKB"/>
</dbReference>
<dbReference type="GO" id="GO:0005681">
    <property type="term" value="C:spliceosomal complex"/>
    <property type="evidence" value="ECO:0000318"/>
    <property type="project" value="GO_Central"/>
</dbReference>
<dbReference type="GO" id="GO:0044547">
    <property type="term" value="F:DNA topoisomerase binding"/>
    <property type="evidence" value="ECO:0000353"/>
    <property type="project" value="CAFA"/>
</dbReference>
<dbReference type="GO" id="GO:0042802">
    <property type="term" value="F:identical protein binding"/>
    <property type="evidence" value="ECO:0000353"/>
    <property type="project" value="IntAct"/>
</dbReference>
<dbReference type="GO" id="GO:0043560">
    <property type="term" value="F:insulin receptor substrate binding"/>
    <property type="evidence" value="ECO:0007669"/>
    <property type="project" value="Ensembl"/>
</dbReference>
<dbReference type="GO" id="GO:0048027">
    <property type="term" value="F:mRNA 5'-UTR binding"/>
    <property type="evidence" value="ECO:0000314"/>
    <property type="project" value="CAFA"/>
</dbReference>
<dbReference type="GO" id="GO:0042731">
    <property type="term" value="F:PH domain binding"/>
    <property type="evidence" value="ECO:0007669"/>
    <property type="project" value="Ensembl"/>
</dbReference>
<dbReference type="GO" id="GO:0003723">
    <property type="term" value="F:RNA binding"/>
    <property type="evidence" value="ECO:0000314"/>
    <property type="project" value="UniProtKB"/>
</dbReference>
<dbReference type="GO" id="GO:0042162">
    <property type="term" value="F:telomeric DNA binding"/>
    <property type="evidence" value="ECO:0000314"/>
    <property type="project" value="UniProtKB"/>
</dbReference>
<dbReference type="GO" id="GO:0001525">
    <property type="term" value="P:angiogenesis"/>
    <property type="evidence" value="ECO:0000314"/>
    <property type="project" value="UniProtKB"/>
</dbReference>
<dbReference type="GO" id="GO:0071364">
    <property type="term" value="P:cellular response to epidermal growth factor stimulus"/>
    <property type="evidence" value="ECO:0007669"/>
    <property type="project" value="Ensembl"/>
</dbReference>
<dbReference type="GO" id="GO:1990830">
    <property type="term" value="P:cellular response to leukemia inhibitory factor"/>
    <property type="evidence" value="ECO:0007669"/>
    <property type="project" value="Ensembl"/>
</dbReference>
<dbReference type="GO" id="GO:0046627">
    <property type="term" value="P:negative regulation of insulin receptor signaling pathway"/>
    <property type="evidence" value="ECO:0007669"/>
    <property type="project" value="Ensembl"/>
</dbReference>
<dbReference type="GO" id="GO:0017148">
    <property type="term" value="P:negative regulation of translation"/>
    <property type="evidence" value="ECO:0000315"/>
    <property type="project" value="CAFA"/>
</dbReference>
<dbReference type="GO" id="GO:0048026">
    <property type="term" value="P:positive regulation of mRNA splicing, via spliceosome"/>
    <property type="evidence" value="ECO:0000318"/>
    <property type="project" value="GO_Central"/>
</dbReference>
<dbReference type="GO" id="GO:0045944">
    <property type="term" value="P:positive regulation of transcription by RNA polymerase II"/>
    <property type="evidence" value="ECO:0007669"/>
    <property type="project" value="Ensembl"/>
</dbReference>
<dbReference type="GO" id="GO:1901838">
    <property type="term" value="P:positive regulation of transcription of nucleolar large rRNA by RNA polymerase I"/>
    <property type="evidence" value="ECO:0000315"/>
    <property type="project" value="UniProtKB"/>
</dbReference>
<dbReference type="CDD" id="cd12403">
    <property type="entry name" value="RRM1_NCL"/>
    <property type="match status" value="1"/>
</dbReference>
<dbReference type="CDD" id="cd12404">
    <property type="entry name" value="RRM2_NCL"/>
    <property type="match status" value="1"/>
</dbReference>
<dbReference type="CDD" id="cd12405">
    <property type="entry name" value="RRM3_NCL"/>
    <property type="match status" value="1"/>
</dbReference>
<dbReference type="CDD" id="cd12406">
    <property type="entry name" value="RRM4_NCL"/>
    <property type="match status" value="1"/>
</dbReference>
<dbReference type="FunFam" id="3.30.70.330:FF:000278">
    <property type="entry name" value="Nucleolin"/>
    <property type="match status" value="1"/>
</dbReference>
<dbReference type="FunFam" id="3.30.70.330:FF:001072">
    <property type="entry name" value="Nucleolin"/>
    <property type="match status" value="1"/>
</dbReference>
<dbReference type="FunFam" id="3.30.70.330:FF:000264">
    <property type="entry name" value="nucleolin"/>
    <property type="match status" value="1"/>
</dbReference>
<dbReference type="FunFam" id="3.30.70.330:FF:000265">
    <property type="entry name" value="nucleolin isoform X1"/>
    <property type="match status" value="1"/>
</dbReference>
<dbReference type="Gene3D" id="3.30.70.330">
    <property type="match status" value="4"/>
</dbReference>
<dbReference type="IDEAL" id="IID00709"/>
<dbReference type="InterPro" id="IPR034230">
    <property type="entry name" value="Nucleolin_RRM1"/>
</dbReference>
<dbReference type="InterPro" id="IPR034233">
    <property type="entry name" value="Nucleolin_RRM2"/>
</dbReference>
<dbReference type="InterPro" id="IPR034234">
    <property type="entry name" value="Nucleolin_RRM3"/>
</dbReference>
<dbReference type="InterPro" id="IPR034235">
    <property type="entry name" value="Nucleolin_RRM4"/>
</dbReference>
<dbReference type="InterPro" id="IPR012677">
    <property type="entry name" value="Nucleotide-bd_a/b_plait_sf"/>
</dbReference>
<dbReference type="InterPro" id="IPR035979">
    <property type="entry name" value="RBD_domain_sf"/>
</dbReference>
<dbReference type="InterPro" id="IPR000504">
    <property type="entry name" value="RRM_dom"/>
</dbReference>
<dbReference type="InterPro" id="IPR003954">
    <property type="entry name" value="RRM_dom_euk"/>
</dbReference>
<dbReference type="PANTHER" id="PTHR23236">
    <property type="entry name" value="EUKARYOTIC TRANSLATION INITIATION FACTOR 4B/4H"/>
    <property type="match status" value="1"/>
</dbReference>
<dbReference type="PANTHER" id="PTHR23236:SF119">
    <property type="entry name" value="NUCLEAR RNA-BINDING PROTEIN SART-3"/>
    <property type="match status" value="1"/>
</dbReference>
<dbReference type="Pfam" id="PF00076">
    <property type="entry name" value="RRM_1"/>
    <property type="match status" value="4"/>
</dbReference>
<dbReference type="SMART" id="SM00360">
    <property type="entry name" value="RRM"/>
    <property type="match status" value="4"/>
</dbReference>
<dbReference type="SMART" id="SM00361">
    <property type="entry name" value="RRM_1"/>
    <property type="match status" value="2"/>
</dbReference>
<dbReference type="SUPFAM" id="SSF54928">
    <property type="entry name" value="RNA-binding domain, RBD"/>
    <property type="match status" value="3"/>
</dbReference>
<dbReference type="PROSITE" id="PS50102">
    <property type="entry name" value="RRM"/>
    <property type="match status" value="4"/>
</dbReference>
<gene>
    <name type="primary">NCL</name>
</gene>
<keyword id="KW-0002">3D-structure</keyword>
<keyword id="KW-0007">Acetylation</keyword>
<keyword id="KW-0963">Cytoplasm</keyword>
<keyword id="KW-0903">Direct protein sequencing</keyword>
<keyword id="KW-0238">DNA-binding</keyword>
<keyword id="KW-1017">Isopeptide bond</keyword>
<keyword id="KW-0488">Methylation</keyword>
<keyword id="KW-0539">Nucleus</keyword>
<keyword id="KW-0597">Phosphoprotein</keyword>
<keyword id="KW-1267">Proteomics identification</keyword>
<keyword id="KW-1185">Reference proteome</keyword>
<keyword id="KW-0677">Repeat</keyword>
<keyword id="KW-0694">RNA-binding</keyword>
<keyword id="KW-0832">Ubl conjugation</keyword>
<proteinExistence type="evidence at protein level"/>
<reference key="1">
    <citation type="journal article" date="1989" name="FEBS Lett.">
        <title>Cloning and sequencing of the human nucleolin cDNA.</title>
        <authorList>
            <person name="Srivastava M."/>
            <person name="Fleming P.J."/>
            <person name="Pollard H.B."/>
            <person name="Burns A.L."/>
        </authorList>
    </citation>
    <scope>NUCLEOTIDE SEQUENCE [MRNA]</scope>
    <source>
        <tissue>Retina</tissue>
    </source>
</reference>
<reference key="2">
    <citation type="journal article" date="1990" name="J. Biol. Chem.">
        <title>Genomic organization and chromosomal localization of the human nucleolin gene.</title>
        <authorList>
            <person name="Srivastava M."/>
            <person name="McBride O.W."/>
            <person name="Fleming P.J."/>
            <person name="Pollard H.B."/>
            <person name="Burns A.L."/>
        </authorList>
    </citation>
    <scope>NUCLEOTIDE SEQUENCE [GENOMIC DNA]</scope>
</reference>
<reference key="3">
    <citation type="journal article" date="2004" name="Nat. Genet.">
        <title>Complete sequencing and characterization of 21,243 full-length human cDNAs.</title>
        <authorList>
            <person name="Ota T."/>
            <person name="Suzuki Y."/>
            <person name="Nishikawa T."/>
            <person name="Otsuki T."/>
            <person name="Sugiyama T."/>
            <person name="Irie R."/>
            <person name="Wakamatsu A."/>
            <person name="Hayashi K."/>
            <person name="Sato H."/>
            <person name="Nagai K."/>
            <person name="Kimura K."/>
            <person name="Makita H."/>
            <person name="Sekine M."/>
            <person name="Obayashi M."/>
            <person name="Nishi T."/>
            <person name="Shibahara T."/>
            <person name="Tanaka T."/>
            <person name="Ishii S."/>
            <person name="Yamamoto J."/>
            <person name="Saito K."/>
            <person name="Kawai Y."/>
            <person name="Isono Y."/>
            <person name="Nakamura Y."/>
            <person name="Nagahari K."/>
            <person name="Murakami K."/>
            <person name="Yasuda T."/>
            <person name="Iwayanagi T."/>
            <person name="Wagatsuma M."/>
            <person name="Shiratori A."/>
            <person name="Sudo H."/>
            <person name="Hosoiri T."/>
            <person name="Kaku Y."/>
            <person name="Kodaira H."/>
            <person name="Kondo H."/>
            <person name="Sugawara M."/>
            <person name="Takahashi M."/>
            <person name="Kanda K."/>
            <person name="Yokoi T."/>
            <person name="Furuya T."/>
            <person name="Kikkawa E."/>
            <person name="Omura Y."/>
            <person name="Abe K."/>
            <person name="Kamihara K."/>
            <person name="Katsuta N."/>
            <person name="Sato K."/>
            <person name="Tanikawa M."/>
            <person name="Yamazaki M."/>
            <person name="Ninomiya K."/>
            <person name="Ishibashi T."/>
            <person name="Yamashita H."/>
            <person name="Murakawa K."/>
            <person name="Fujimori K."/>
            <person name="Tanai H."/>
            <person name="Kimata M."/>
            <person name="Watanabe M."/>
            <person name="Hiraoka S."/>
            <person name="Chiba Y."/>
            <person name="Ishida S."/>
            <person name="Ono Y."/>
            <person name="Takiguchi S."/>
            <person name="Watanabe S."/>
            <person name="Yosida M."/>
            <person name="Hotuta T."/>
            <person name="Kusano J."/>
            <person name="Kanehori K."/>
            <person name="Takahashi-Fujii A."/>
            <person name="Hara H."/>
            <person name="Tanase T.-O."/>
            <person name="Nomura Y."/>
            <person name="Togiya S."/>
            <person name="Komai F."/>
            <person name="Hara R."/>
            <person name="Takeuchi K."/>
            <person name="Arita M."/>
            <person name="Imose N."/>
            <person name="Musashino K."/>
            <person name="Yuuki H."/>
            <person name="Oshima A."/>
            <person name="Sasaki N."/>
            <person name="Aotsuka S."/>
            <person name="Yoshikawa Y."/>
            <person name="Matsunawa H."/>
            <person name="Ichihara T."/>
            <person name="Shiohata N."/>
            <person name="Sano S."/>
            <person name="Moriya S."/>
            <person name="Momiyama H."/>
            <person name="Satoh N."/>
            <person name="Takami S."/>
            <person name="Terashima Y."/>
            <person name="Suzuki O."/>
            <person name="Nakagawa S."/>
            <person name="Senoh A."/>
            <person name="Mizoguchi H."/>
            <person name="Goto Y."/>
            <person name="Shimizu F."/>
            <person name="Wakebe H."/>
            <person name="Hishigaki H."/>
            <person name="Watanabe T."/>
            <person name="Sugiyama A."/>
            <person name="Takemoto M."/>
            <person name="Kawakami B."/>
            <person name="Yamazaki M."/>
            <person name="Watanabe K."/>
            <person name="Kumagai A."/>
            <person name="Itakura S."/>
            <person name="Fukuzumi Y."/>
            <person name="Fujimori Y."/>
            <person name="Komiyama M."/>
            <person name="Tashiro H."/>
            <person name="Tanigami A."/>
            <person name="Fujiwara T."/>
            <person name="Ono T."/>
            <person name="Yamada K."/>
            <person name="Fujii Y."/>
            <person name="Ozaki K."/>
            <person name="Hirao M."/>
            <person name="Ohmori Y."/>
            <person name="Kawabata A."/>
            <person name="Hikiji T."/>
            <person name="Kobatake N."/>
            <person name="Inagaki H."/>
            <person name="Ikema Y."/>
            <person name="Okamoto S."/>
            <person name="Okitani R."/>
            <person name="Kawakami T."/>
            <person name="Noguchi S."/>
            <person name="Itoh T."/>
            <person name="Shigeta K."/>
            <person name="Senba T."/>
            <person name="Matsumura K."/>
            <person name="Nakajima Y."/>
            <person name="Mizuno T."/>
            <person name="Morinaga M."/>
            <person name="Sasaki M."/>
            <person name="Togashi T."/>
            <person name="Oyama M."/>
            <person name="Hata H."/>
            <person name="Watanabe M."/>
            <person name="Komatsu T."/>
            <person name="Mizushima-Sugano J."/>
            <person name="Satoh T."/>
            <person name="Shirai Y."/>
            <person name="Takahashi Y."/>
            <person name="Nakagawa K."/>
            <person name="Okumura K."/>
            <person name="Nagase T."/>
            <person name="Nomura N."/>
            <person name="Kikuchi H."/>
            <person name="Masuho Y."/>
            <person name="Yamashita R."/>
            <person name="Nakai K."/>
            <person name="Yada T."/>
            <person name="Nakamura Y."/>
            <person name="Ohara O."/>
            <person name="Isogai T."/>
            <person name="Sugano S."/>
        </authorList>
    </citation>
    <scope>NUCLEOTIDE SEQUENCE [LARGE SCALE MRNA]</scope>
    <source>
        <tissue>Hair follicle dermal papilla</tissue>
    </source>
</reference>
<reference key="4">
    <citation type="journal article" date="2005" name="Nature">
        <title>Generation and annotation of the DNA sequences of human chromosomes 2 and 4.</title>
        <authorList>
            <person name="Hillier L.W."/>
            <person name="Graves T.A."/>
            <person name="Fulton R.S."/>
            <person name="Fulton L.A."/>
            <person name="Pepin K.H."/>
            <person name="Minx P."/>
            <person name="Wagner-McPherson C."/>
            <person name="Layman D."/>
            <person name="Wylie K."/>
            <person name="Sekhon M."/>
            <person name="Becker M.C."/>
            <person name="Fewell G.A."/>
            <person name="Delehaunty K.D."/>
            <person name="Miner T.L."/>
            <person name="Nash W.E."/>
            <person name="Kremitzki C."/>
            <person name="Oddy L."/>
            <person name="Du H."/>
            <person name="Sun H."/>
            <person name="Bradshaw-Cordum H."/>
            <person name="Ali J."/>
            <person name="Carter J."/>
            <person name="Cordes M."/>
            <person name="Harris A."/>
            <person name="Isak A."/>
            <person name="van Brunt A."/>
            <person name="Nguyen C."/>
            <person name="Du F."/>
            <person name="Courtney L."/>
            <person name="Kalicki J."/>
            <person name="Ozersky P."/>
            <person name="Abbott S."/>
            <person name="Armstrong J."/>
            <person name="Belter E.A."/>
            <person name="Caruso L."/>
            <person name="Cedroni M."/>
            <person name="Cotton M."/>
            <person name="Davidson T."/>
            <person name="Desai A."/>
            <person name="Elliott G."/>
            <person name="Erb T."/>
            <person name="Fronick C."/>
            <person name="Gaige T."/>
            <person name="Haakenson W."/>
            <person name="Haglund K."/>
            <person name="Holmes A."/>
            <person name="Harkins R."/>
            <person name="Kim K."/>
            <person name="Kruchowski S.S."/>
            <person name="Strong C.M."/>
            <person name="Grewal N."/>
            <person name="Goyea E."/>
            <person name="Hou S."/>
            <person name="Levy A."/>
            <person name="Martinka S."/>
            <person name="Mead K."/>
            <person name="McLellan M.D."/>
            <person name="Meyer R."/>
            <person name="Randall-Maher J."/>
            <person name="Tomlinson C."/>
            <person name="Dauphin-Kohlberg S."/>
            <person name="Kozlowicz-Reilly A."/>
            <person name="Shah N."/>
            <person name="Swearengen-Shahid S."/>
            <person name="Snider J."/>
            <person name="Strong J.T."/>
            <person name="Thompson J."/>
            <person name="Yoakum M."/>
            <person name="Leonard S."/>
            <person name="Pearman C."/>
            <person name="Trani L."/>
            <person name="Radionenko M."/>
            <person name="Waligorski J.E."/>
            <person name="Wang C."/>
            <person name="Rock S.M."/>
            <person name="Tin-Wollam A.-M."/>
            <person name="Maupin R."/>
            <person name="Latreille P."/>
            <person name="Wendl M.C."/>
            <person name="Yang S.-P."/>
            <person name="Pohl C."/>
            <person name="Wallis J.W."/>
            <person name="Spieth J."/>
            <person name="Bieri T.A."/>
            <person name="Berkowicz N."/>
            <person name="Nelson J.O."/>
            <person name="Osborne J."/>
            <person name="Ding L."/>
            <person name="Meyer R."/>
            <person name="Sabo A."/>
            <person name="Shotland Y."/>
            <person name="Sinha P."/>
            <person name="Wohldmann P.E."/>
            <person name="Cook L.L."/>
            <person name="Hickenbotham M.T."/>
            <person name="Eldred J."/>
            <person name="Williams D."/>
            <person name="Jones T.A."/>
            <person name="She X."/>
            <person name="Ciccarelli F.D."/>
            <person name="Izaurralde E."/>
            <person name="Taylor J."/>
            <person name="Schmutz J."/>
            <person name="Myers R.M."/>
            <person name="Cox D.R."/>
            <person name="Huang X."/>
            <person name="McPherson J.D."/>
            <person name="Mardis E.R."/>
            <person name="Clifton S.W."/>
            <person name="Warren W.C."/>
            <person name="Chinwalla A.T."/>
            <person name="Eddy S.R."/>
            <person name="Marra M.A."/>
            <person name="Ovcharenko I."/>
            <person name="Furey T.S."/>
            <person name="Miller W."/>
            <person name="Eichler E.E."/>
            <person name="Bork P."/>
            <person name="Suyama M."/>
            <person name="Torrents D."/>
            <person name="Waterston R.H."/>
            <person name="Wilson R.K."/>
        </authorList>
    </citation>
    <scope>NUCLEOTIDE SEQUENCE [LARGE SCALE GENOMIC DNA]</scope>
</reference>
<reference key="5">
    <citation type="journal article" date="1995" name="Biochim. Biophys. Acta">
        <title>Purification and partial amino acid sequencing of a fructosyllysine-specific binding protein from cell membranes of the monocyte-like cell line U937.</title>
        <authorList>
            <person name="Krantz S."/>
            <person name="Salazar R."/>
            <person name="Brandt R."/>
            <person name="Kellermann J."/>
            <person name="Lottspeich F."/>
        </authorList>
    </citation>
    <scope>PROTEIN SEQUENCE OF 2-7; 349-362 AND 610-624</scope>
    <source>
        <tissue>Lymphoma</tissue>
    </source>
</reference>
<reference key="6">
    <citation type="journal article" date="1994" name="Biochemistry">
        <title>Major cell surface-located protein substrates of an ecto-protein kinase are homologs of known nuclear proteins.</title>
        <authorList>
            <person name="Jordan P."/>
            <person name="Heid H."/>
            <person name="Kinzel V."/>
            <person name="Kubler D."/>
        </authorList>
    </citation>
    <scope>PROTEIN SEQUENCE OF 231-236; 349-362; 399-403; 458-461 AND 649-653</scope>
</reference>
<reference key="7">
    <citation type="journal article" date="1993" name="Mol. Cell. Biol.">
        <title>Nuclear proteins that bind the pre-mRNA 3' splice site sequence r(UUAG/G) and the human telomeric DNA sequence d(TTAGGG)n.</title>
        <authorList>
            <person name="Ishikawa F."/>
            <person name="Matunis M.J."/>
            <person name="Dreyfuss G."/>
            <person name="Cech T.R."/>
        </authorList>
    </citation>
    <scope>PROTEIN SEQUENCE OF 458-474</scope>
    <scope>NUCLEOTIDE-BINDING</scope>
    <source>
        <tissue>Cervix carcinoma</tissue>
    </source>
</reference>
<reference key="8">
    <citation type="journal article" date="1999" name="EMBO J.">
        <title>A novel RNA polymerase II-containing complex potentiates Tat-enhanced HIV-1 transcription.</title>
        <authorList>
            <person name="Parada C.A."/>
            <person name="Roeder R.G."/>
        </authorList>
    </citation>
    <scope>FUNCTION</scope>
    <scope>IDENTIFICATION IN A COMPLEX WITH HTATSF1; CCNT1; RNA POLYMERASE II; SUPT5H AND CDK9</scope>
</reference>
<reference key="9">
    <citation type="journal article" date="2002" name="J. Biol. Chem.">
        <title>The anti-HIV cytokine midkine binds the cell surface-expressed nucleolin as a low affinity receptor.</title>
        <authorList>
            <person name="Said E.A."/>
            <person name="Krust B."/>
            <person name="Nisole S."/>
            <person name="Svab J."/>
            <person name="Briand J.P."/>
            <person name="Hovanessian A.G."/>
        </authorList>
    </citation>
    <scope>INTERACTION WITH MDK</scope>
</reference>
<reference key="10">
    <citation type="journal article" date="2002" name="Mol. Biol. Cell">
        <title>Functional proteomic analysis of human nucleolus.</title>
        <authorList>
            <person name="Scherl A."/>
            <person name="Coute Y."/>
            <person name="Deon C."/>
            <person name="Calle A."/>
            <person name="Kindbeiter K."/>
            <person name="Sanchez J.-C."/>
            <person name="Greco A."/>
            <person name="Hochstrasser D.F."/>
            <person name="Diaz J.-J."/>
        </authorList>
    </citation>
    <scope>SUBCELLULAR LOCATION [LARGE SCALE ANALYSIS]</scope>
    <source>
        <tissue>Cervix carcinoma</tissue>
    </source>
</reference>
<reference key="11">
    <citation type="journal article" date="2003" name="Nature">
        <title>Proteomic characterization of the human centrosome by protein correlation profiling.</title>
        <authorList>
            <person name="Andersen J.S."/>
            <person name="Wilkinson C.J."/>
            <person name="Mayor T."/>
            <person name="Mortensen P."/>
            <person name="Nigg E.A."/>
            <person name="Mann M."/>
        </authorList>
    </citation>
    <scope>IDENTIFICATION BY MASS SPECTROMETRY</scope>
    <source>
        <tissue>Lymphoblast</tissue>
    </source>
</reference>
<reference key="12">
    <citation type="journal article" date="2004" name="Hum. Mol. Genet.">
        <title>Aprataxin, a novel protein that protects against genotoxic stress.</title>
        <authorList>
            <person name="Gueven N."/>
            <person name="Becherel O.J."/>
            <person name="Kijas A.W."/>
            <person name="Chen P."/>
            <person name="Howe O."/>
            <person name="Rudolph J.H."/>
            <person name="Gatti R."/>
            <person name="Date H."/>
            <person name="Onodera O."/>
            <person name="Taucher-Scholz G."/>
            <person name="Lavin M.F."/>
        </authorList>
    </citation>
    <scope>INTERACTION WITH APTX</scope>
</reference>
<reference key="13">
    <citation type="journal article" date="2004" name="J. Biol. Chem.">
        <title>Nucleolin interacts with telomerase.</title>
        <authorList>
            <person name="Khurts S."/>
            <person name="Masutomi K."/>
            <person name="Delgermaa L."/>
            <person name="Arai K."/>
            <person name="Oishi N."/>
            <person name="Mizuno H."/>
            <person name="Hayashi N."/>
            <person name="Hahn W.C."/>
            <person name="Murakami S."/>
        </authorList>
    </citation>
    <scope>INTERACTION WITH TERT</scope>
</reference>
<reference key="14">
    <citation type="journal article" date="2006" name="Cell">
        <title>Global, in vivo, and site-specific phosphorylation dynamics in signaling networks.</title>
        <authorList>
            <person name="Olsen J.V."/>
            <person name="Blagoev B."/>
            <person name="Gnad F."/>
            <person name="Macek B."/>
            <person name="Kumar C."/>
            <person name="Mortensen P."/>
            <person name="Mann M."/>
        </authorList>
    </citation>
    <scope>PHOSPHORYLATION [LARGE SCALE ANALYSIS] AT SER-145; SER-153 AND SER-563</scope>
    <scope>IDENTIFICATION BY MASS SPECTROMETRY [LARGE SCALE ANALYSIS]</scope>
    <source>
        <tissue>Cervix carcinoma</tissue>
    </source>
</reference>
<reference key="15">
    <citation type="journal article" date="2006" name="Nat. Biotechnol.">
        <title>A probability-based approach for high-throughput protein phosphorylation analysis and site localization.</title>
        <authorList>
            <person name="Beausoleil S.A."/>
            <person name="Villen J."/>
            <person name="Gerber S.A."/>
            <person name="Rush J."/>
            <person name="Gygi S.P."/>
        </authorList>
    </citation>
    <scope>PHOSPHORYLATION [LARGE SCALE ANALYSIS] AT SER-580</scope>
    <scope>IDENTIFICATION BY MASS SPECTROMETRY [LARGE SCALE ANALYSIS]</scope>
    <source>
        <tissue>Cervix carcinoma</tissue>
    </source>
</reference>
<reference key="16">
    <citation type="journal article" date="2007" name="Electrophoresis">
        <title>Toward a global characterization of the phosphoproteome in prostate cancer cells: identification of phosphoproteins in the LNCaP cell line.</title>
        <authorList>
            <person name="Giorgianni F."/>
            <person name="Zhao Y."/>
            <person name="Desiderio D.M."/>
            <person name="Beranova-Giorgianni S."/>
        </authorList>
    </citation>
    <scope>PHOSPHORYLATION [LARGE SCALE ANALYSIS] AT SER-145; SER-153; SER-184 AND SER-206</scope>
    <scope>IDENTIFICATION BY MASS SPECTROMETRY [LARGE SCALE ANALYSIS]</scope>
    <source>
        <tissue>Prostate cancer</tissue>
    </source>
</reference>
<reference key="17">
    <citation type="journal article" date="2007" name="Exp. Cell Res.">
        <title>Nucleolin modulates the subcellular localization of GDNF-inducible zinc finger protein 1 and its roles in transcription and cell proliferation.</title>
        <authorList>
            <person name="Dambara A."/>
            <person name="Morinaga T."/>
            <person name="Fukuda N."/>
            <person name="Yamakawa Y."/>
            <person name="Kato T."/>
            <person name="Enomoto A."/>
            <person name="Asai N."/>
            <person name="Murakumo Y."/>
            <person name="Matsuo S."/>
            <person name="Takahashi M."/>
        </authorList>
    </citation>
    <scope>INTERACTION WITH GZF1</scope>
    <scope>SUBCELLULAR LOCATION</scope>
</reference>
<reference key="18">
    <citation type="journal article" date="2007" name="J. Proteome Res.">
        <title>Improved titanium dioxide enrichment of phosphopeptides from HeLa cells and high confident phosphopeptide identification by cross-validation of MS/MS and MS/MS/MS spectra.</title>
        <authorList>
            <person name="Yu L.R."/>
            <person name="Zhu Z."/>
            <person name="Chan K.C."/>
            <person name="Issaq H.J."/>
            <person name="Dimitrov D.S."/>
            <person name="Veenstra T.D."/>
        </authorList>
    </citation>
    <scope>PHOSPHORYLATION [LARGE SCALE ANALYSIS] AT THR-76 AND THR-121</scope>
    <scope>IDENTIFICATION BY MASS SPECTROMETRY [LARGE SCALE ANALYSIS]</scope>
    <source>
        <tissue>Cervix carcinoma</tissue>
    </source>
</reference>
<reference key="19">
    <citation type="journal article" date="2007" name="Mol. Biol. Cell">
        <title>Aurora-B regulates RNA methyltransferase NSUN2.</title>
        <authorList>
            <person name="Sakita-Suto S."/>
            <person name="Kanda A."/>
            <person name="Suzuki F."/>
            <person name="Sato S."/>
            <person name="Takata T."/>
            <person name="Tatsuka M."/>
        </authorList>
    </citation>
    <scope>INTERACTION WITH NSUN2</scope>
</reference>
<reference key="20">
    <citation type="journal article" date="2007" name="Mol. Cell. Proteomics">
        <title>Molecular composition of IMP1 ribonucleoprotein granules.</title>
        <authorList>
            <person name="Joeson L."/>
            <person name="Vikesaa J."/>
            <person name="Krogh A."/>
            <person name="Nielsen L.K."/>
            <person name="Hansen T."/>
            <person name="Borup R."/>
            <person name="Johnsen A.H."/>
            <person name="Christiansen J."/>
            <person name="Nielsen F.C."/>
        </authorList>
    </citation>
    <scope>IDENTIFICATION IN A MRNP GRANULE COMPLEX</scope>
    <scope>IDENTIFICATION BY MASS SPECTROMETRY</scope>
    <scope>SUBCELLULAR LOCATION</scope>
</reference>
<reference key="21">
    <citation type="journal article" date="2008" name="Proc. Natl. Acad. Sci. U.S.A.">
        <title>A quantitative atlas of mitotic phosphorylation.</title>
        <authorList>
            <person name="Dephoure N."/>
            <person name="Zhou C."/>
            <person name="Villen J."/>
            <person name="Beausoleil S.A."/>
            <person name="Bakalarski C.E."/>
            <person name="Elledge S.J."/>
            <person name="Gygi S.P."/>
        </authorList>
    </citation>
    <scope>PHOSPHORYLATION [LARGE SCALE ANALYSIS] AT SER-67; THR-69; SER-184; SER-206 AND THR-214</scope>
    <scope>IDENTIFICATION BY MASS SPECTROMETRY [LARGE SCALE ANALYSIS]</scope>
    <source>
        <tissue>Cervix carcinoma</tissue>
    </source>
</reference>
<reference key="22">
    <citation type="journal article" date="2009" name="Anal. Chem.">
        <title>Lys-N and trypsin cover complementary parts of the phosphoproteome in a refined SCX-based approach.</title>
        <authorList>
            <person name="Gauci S."/>
            <person name="Helbig A.O."/>
            <person name="Slijper M."/>
            <person name="Krijgsveld J."/>
            <person name="Heck A.J."/>
            <person name="Mohammed S."/>
        </authorList>
    </citation>
    <scope>IDENTIFICATION BY MASS SPECTROMETRY [LARGE SCALE ANALYSIS]</scope>
</reference>
<reference key="23">
    <citation type="journal article" date="2009" name="J. Biol. Chem.">
        <title>The metastasis efficiency modifier ribosomal RNA processing 1 homolog B (RRP1B) is a chromatin-associated factor.</title>
        <authorList>
            <person name="Crawford N.P."/>
            <person name="Yang H."/>
            <person name="Mattaini K.R."/>
            <person name="Hunter K.W."/>
        </authorList>
    </citation>
    <scope>INTERACTION WITH RRP1B</scope>
</reference>
<reference key="24">
    <citation type="journal article" date="2009" name="Sci. Signal.">
        <title>Quantitative phosphoproteomic analysis of T cell receptor signaling reveals system-wide modulation of protein-protein interactions.</title>
        <authorList>
            <person name="Mayya V."/>
            <person name="Lundgren D.H."/>
            <person name="Hwang S.-I."/>
            <person name="Rezaul K."/>
            <person name="Wu L."/>
            <person name="Eng J.K."/>
            <person name="Rodionov V."/>
            <person name="Han D.K."/>
        </authorList>
    </citation>
    <scope>PHOSPHORYLATION [LARGE SCALE ANALYSIS] AT SER-28; SER-34 AND THR-301</scope>
    <scope>IDENTIFICATION BY MASS SPECTROMETRY [LARGE SCALE ANALYSIS]</scope>
    <source>
        <tissue>Leukemic T-cell</tissue>
    </source>
</reference>
<reference key="25">
    <citation type="journal article" date="2009" name="Science">
        <title>Lysine acetylation targets protein complexes and co-regulates major cellular functions.</title>
        <authorList>
            <person name="Choudhary C."/>
            <person name="Kumar C."/>
            <person name="Gnad F."/>
            <person name="Nielsen M.L."/>
            <person name="Rehman M."/>
            <person name="Walther T.C."/>
            <person name="Olsen J.V."/>
            <person name="Mann M."/>
        </authorList>
    </citation>
    <scope>ACETYLATION [LARGE SCALE ANALYSIS] AT LYS-9; LYS-102; LYS-116; LYS-124; LYS-318; LYS-377; LYS-398; LYS-403; LYS-513; LYS-572; LYS-577 AND LYS-646</scope>
    <scope>IDENTIFICATION BY MASS SPECTROMETRY [LARGE SCALE ANALYSIS]</scope>
</reference>
<reference key="26">
    <citation type="journal article" date="2010" name="Mol. Cancer Res.">
        <title>Interactions of ErbB4 and Kap1 connect the growth factor and DNA damage response pathways.</title>
        <authorList>
            <person name="Gilmore-Hebert M."/>
            <person name="Ramabhadran R."/>
            <person name="Stern D.F."/>
        </authorList>
    </citation>
    <scope>IDENTIFICATION BY MASS SPECTROMETRY</scope>
    <scope>INTERACTION WITH ERBB4</scope>
    <scope>SUBCELLULAR LOCATION</scope>
</reference>
<reference key="27">
    <citation type="journal article" date="2010" name="PLoS ONE">
        <title>Phosphorylation of human tristetraprolin in response to its interaction with the Cbl interacting protein CIN85.</title>
        <authorList>
            <person name="Kedar V.P."/>
            <person name="Darby M.K."/>
            <person name="Williams J.G."/>
            <person name="Blackshear P.J."/>
        </authorList>
    </citation>
    <scope>INTERACTION WITH ZFP36</scope>
</reference>
<reference key="28">
    <citation type="journal article" date="2010" name="Sci. Signal.">
        <title>Quantitative phosphoproteomics reveals widespread full phosphorylation site occupancy during mitosis.</title>
        <authorList>
            <person name="Olsen J.V."/>
            <person name="Vermeulen M."/>
            <person name="Santamaria A."/>
            <person name="Kumar C."/>
            <person name="Miller M.L."/>
            <person name="Jensen L.J."/>
            <person name="Gnad F."/>
            <person name="Cox J."/>
            <person name="Jensen T.S."/>
            <person name="Nigg E.A."/>
            <person name="Brunak S."/>
            <person name="Mann M."/>
        </authorList>
    </citation>
    <scope>PHOSPHORYLATION [LARGE SCALE ANALYSIS] AT SER-28; SER-34; SER-67; THR-69; THR-76; THR-84; THR-92; THR-99; THR-106; THR-113; THR-121; SER-145; SER-563 AND SER-619</scope>
    <scope>IDENTIFICATION BY MASS SPECTROMETRY [LARGE SCALE ANALYSIS]</scope>
    <source>
        <tissue>Cervix carcinoma</tissue>
    </source>
</reference>
<reference key="29">
    <citation type="journal article" date="2011" name="BMC Syst. Biol.">
        <title>Initial characterization of the human central proteome.</title>
        <authorList>
            <person name="Burkard T.R."/>
            <person name="Planyavsky M."/>
            <person name="Kaupe I."/>
            <person name="Breitwieser F.P."/>
            <person name="Buerckstuemmer T."/>
            <person name="Bennett K.L."/>
            <person name="Superti-Furga G."/>
            <person name="Colinge J."/>
        </authorList>
    </citation>
    <scope>IDENTIFICATION BY MASS SPECTROMETRY [LARGE SCALE ANALYSIS]</scope>
</reference>
<reference key="30">
    <citation type="journal article" date="2011" name="J. Biol. Chem.">
        <title>RioK1, a new interactor of protein arginine methyltransferase 5 (PRMT5), competes with pICln for binding and modulates PRMT5 complex composition and substrate specificity.</title>
        <authorList>
            <person name="Guderian G."/>
            <person name="Peter C."/>
            <person name="Wiesner J."/>
            <person name="Sickmann A."/>
            <person name="Schulze-Osthoff K."/>
            <person name="Fischer U."/>
            <person name="Grimmler M."/>
        </authorList>
    </citation>
    <scope>SUBUNIT</scope>
    <scope>INTERACTION WITH RIOK1</scope>
    <scope>METHYLATION BY PRTM5</scope>
</reference>
<reference key="31">
    <citation type="journal article" date="2011" name="J. Biol. Chem.">
        <title>Structure and function of the N-terminal nucleolin binding domain of nuclear valosin-containing protein-like 2 (NVL2) harboring a nucleolar localization signal.</title>
        <authorList>
            <person name="Fujiwara Y."/>
            <person name="Fujiwara K."/>
            <person name="Goda N."/>
            <person name="Iwaya N."/>
            <person name="Tenno T."/>
            <person name="Shirakawa M."/>
            <person name="Hiroaki H."/>
        </authorList>
    </citation>
    <scope>INTERACTION WITH NVL</scope>
</reference>
<reference key="32">
    <citation type="journal article" date="2011" name="J. Cell Sci.">
        <title>The nuclear scaffold protein SAF-A is required for kinetochore-microtubule attachment and contributes to the targeting of Aurora-A to mitotic spindles.</title>
        <authorList>
            <person name="Ma N."/>
            <person name="Matsunaga S."/>
            <person name="Morimoto A."/>
            <person name="Sakashita G."/>
            <person name="Urano T."/>
            <person name="Uchiyama S."/>
            <person name="Fukui K."/>
        </authorList>
    </citation>
    <scope>INTERACTION WITH HNRNPU</scope>
</reference>
<reference key="33">
    <citation type="journal article" date="2011" name="Mol. Cell">
        <title>Human senataxin resolves RNA/DNA hybrids formed at transcriptional pause sites to promote Xrn2-dependent termination.</title>
        <authorList>
            <person name="Skourti-Stathaki K."/>
            <person name="Proudfoot N.J."/>
            <person name="Gromak N."/>
        </authorList>
    </citation>
    <scope>INTERACTION WITH SETX</scope>
</reference>
<reference key="34">
    <citation type="journal article" date="2011" name="Mol. Cell. Proteomics">
        <title>Splicing factor 2-associated protein p32 participates in ribosome biogenesis by regulating the binding of Nop52 and fibrillarin to preribosome particles.</title>
        <authorList>
            <person name="Yoshikawa H."/>
            <person name="Komatsu W."/>
            <person name="Hayano T."/>
            <person name="Miura Y."/>
            <person name="Homma K."/>
            <person name="Izumikawa K."/>
            <person name="Ishikawa H."/>
            <person name="Miyazawa N."/>
            <person name="Tachikawa H."/>
            <person name="Yamauchi Y."/>
            <person name="Isobe T."/>
            <person name="Takahashi N."/>
        </authorList>
    </citation>
    <scope>INTERACTION WITH C1QBP</scope>
</reference>
<reference key="35">
    <citation type="journal article" date="2011" name="Sci. Signal.">
        <title>System-wide temporal characterization of the proteome and phosphoproteome of human embryonic stem cell differentiation.</title>
        <authorList>
            <person name="Rigbolt K.T."/>
            <person name="Prokhorova T.A."/>
            <person name="Akimov V."/>
            <person name="Henningsen J."/>
            <person name="Johansen P.T."/>
            <person name="Kratchmarova I."/>
            <person name="Kassem M."/>
            <person name="Mann M."/>
            <person name="Olsen J.V."/>
            <person name="Blagoev B."/>
        </authorList>
    </citation>
    <scope>PHOSPHORYLATION [LARGE SCALE ANALYSIS] AT SER-67; THR-69; SER-563; SER-580 AND SER-619</scope>
    <scope>IDENTIFICATION BY MASS SPECTROMETRY [LARGE SCALE ANALYSIS]</scope>
</reference>
<reference key="36">
    <citation type="journal article" date="2013" name="Cell Rep.">
        <title>ABH2 couples regulation of ribosomal DNA transcription with DNA alkylation repair.</title>
        <authorList>
            <person name="Li P."/>
            <person name="Gao S."/>
            <person name="Wang L."/>
            <person name="Yu F."/>
            <person name="Li J."/>
            <person name="Wang C."/>
            <person name="Li J."/>
            <person name="Wong J."/>
        </authorList>
    </citation>
    <scope>INTERACTION WITH ALKBH2</scope>
</reference>
<reference key="37">
    <citation type="journal article" date="2013" name="Genes Cells">
        <title>Nucleolar scaffold protein, WDR46, determines the granular compartmental localization of nucleolin and DDX21.</title>
        <authorList>
            <person name="Hirai Y."/>
            <person name="Louvet E."/>
            <person name="Oda T."/>
            <person name="Kumeta M."/>
            <person name="Watanabe Y."/>
            <person name="Horigome T."/>
            <person name="Takeyasu K."/>
        </authorList>
    </citation>
    <scope>INTERACTION WITH WDR46</scope>
</reference>
<reference key="38">
    <citation type="journal article" date="2013" name="J. Proteome Res.">
        <title>Toward a comprehensive characterization of a human cancer cell phosphoproteome.</title>
        <authorList>
            <person name="Zhou H."/>
            <person name="Di Palma S."/>
            <person name="Preisinger C."/>
            <person name="Peng M."/>
            <person name="Polat A.N."/>
            <person name="Heck A.J."/>
            <person name="Mohammed S."/>
        </authorList>
    </citation>
    <scope>PHOSPHORYLATION [LARGE SCALE ANALYSIS] AT SER-67; THR-76; THR-121; SER-145; SER-153; SER-184; SER-206; SER-356; THR-367; THR-405; SER-458; SER-460; SER-563; SER-580 AND SER-619</scope>
    <scope>IDENTIFICATION BY MASS SPECTROMETRY [LARGE SCALE ANALYSIS]</scope>
    <source>
        <tissue>Cervix carcinoma</tissue>
        <tissue>Erythroleukemia</tissue>
    </source>
</reference>
<reference key="39">
    <citation type="journal article" date="2014" name="Mol. Cell. Biol.">
        <title>MDM2 mediates nonproteolytic polyubiquitylation of the DEAD-Box RNA helicase DDX24.</title>
        <authorList>
            <person name="Yamauchi T."/>
            <person name="Nishiyama M."/>
            <person name="Moroishi T."/>
            <person name="Yumimoto K."/>
            <person name="Nakayama K.I."/>
        </authorList>
    </citation>
    <scope>INTERACTION WITH DDX24</scope>
</reference>
<reference key="40">
    <citation type="journal article" date="2014" name="J. Proteomics">
        <title>An enzyme assisted RP-RPLC approach for in-depth analysis of human liver phosphoproteome.</title>
        <authorList>
            <person name="Bian Y."/>
            <person name="Song C."/>
            <person name="Cheng K."/>
            <person name="Dong M."/>
            <person name="Wang F."/>
            <person name="Huang J."/>
            <person name="Sun D."/>
            <person name="Wang L."/>
            <person name="Ye M."/>
            <person name="Zou H."/>
        </authorList>
    </citation>
    <scope>PHOSPHORYLATION [LARGE SCALE ANALYSIS] AT SER-41; SER-42; SER-67; SER-184; SER-580; SER-591 AND SER-619</scope>
    <scope>IDENTIFICATION BY MASS SPECTROMETRY [LARGE SCALE ANALYSIS]</scope>
    <source>
        <tissue>Liver</tissue>
    </source>
</reference>
<reference key="41">
    <citation type="journal article" date="2014" name="Mol. Cell. Proteomics">
        <title>Immunoaffinity enrichment and mass spectrometry analysis of protein methylation.</title>
        <authorList>
            <person name="Guo A."/>
            <person name="Gu H."/>
            <person name="Zhou J."/>
            <person name="Mulhern D."/>
            <person name="Wang Y."/>
            <person name="Lee K.A."/>
            <person name="Yang V."/>
            <person name="Aguiar M."/>
            <person name="Kornhauser J."/>
            <person name="Jia X."/>
            <person name="Ren J."/>
            <person name="Beausoleil S.A."/>
            <person name="Silva J.C."/>
            <person name="Vemulapalli V."/>
            <person name="Bedford M.T."/>
            <person name="Comb M.J."/>
        </authorList>
    </citation>
    <scope>IDENTIFICATION BY MASS SPECTROMETRY [LARGE SCALE ANALYSIS]</scope>
    <source>
        <tissue>Colon carcinoma</tissue>
    </source>
</reference>
<reference key="42">
    <citation type="journal article" date="2014" name="PLoS ONE">
        <title>Subcellular fractionation and localization studies reveal a direct interaction of the fragile X mental retardation protein (FMRP) with nucleolin.</title>
        <authorList>
            <person name="Taha M.S."/>
            <person name="Nouri K."/>
            <person name="Milroy L.G."/>
            <person name="Moll J.M."/>
            <person name="Herrmann C."/>
            <person name="Brunsveld L."/>
            <person name="Piekorz R.P."/>
            <person name="Ahmadian M.R."/>
        </authorList>
    </citation>
    <scope>INTERACTION WITH FMR1</scope>
</reference>
<reference key="43">
    <citation type="journal article" date="2014" name="Proc. Natl. Acad. Sci. U.S.A.">
        <title>Mapping of SUMO sites and analysis of SUMOylation changes induced by external stimuli.</title>
        <authorList>
            <person name="Impens F."/>
            <person name="Radoshevich L."/>
            <person name="Cossart P."/>
            <person name="Ribet D."/>
        </authorList>
    </citation>
    <scope>SUMOYLATION [LARGE SCALE ANALYSIS] AT LYS-297; LYS-324 AND LYS-589</scope>
    <scope>IDENTIFICATION BY MASS SPECTROMETRY [LARGE SCALE ANALYSIS]</scope>
</reference>
<reference key="44">
    <citation type="journal article" date="2015" name="PLoS ONE">
        <title>IGFBP-5 Promotes Fibrosis Independently of Its Translocation to the Nucleus and Its Interaction with Nucleolin and IGF.</title>
        <authorList>
            <person name="Su Y."/>
            <person name="Nishimoto T."/>
            <person name="Feghali-Bostwick C."/>
        </authorList>
    </citation>
    <scope>INTERACTION WITH IGFBP5</scope>
    <scope>SUBCELLULAR LOCATION</scope>
</reference>
<reference key="45">
    <citation type="journal article" date="2015" name="Proteomics">
        <title>N-terminome analysis of the human mitochondrial proteome.</title>
        <authorList>
            <person name="Vaca Jacome A.S."/>
            <person name="Rabilloud T."/>
            <person name="Schaeffer-Reiss C."/>
            <person name="Rompais M."/>
            <person name="Ayoub D."/>
            <person name="Lane L."/>
            <person name="Bairoch A."/>
            <person name="Van Dorsselaer A."/>
            <person name="Carapito C."/>
        </authorList>
    </citation>
    <scope>IDENTIFICATION BY MASS SPECTROMETRY [LARGE SCALE ANALYSIS]</scope>
</reference>
<reference key="46">
    <citation type="journal article" date="2016" name="Biol. Chem.">
        <title>Two new isoforms of the human hepatoma-derived growth factor interact with components of the cytoskeleton.</title>
        <authorList>
            <person name="Nuesse J."/>
            <person name="Mirastschijski U."/>
            <person name="Waespy M."/>
            <person name="Oetjen J."/>
            <person name="Brandes N."/>
            <person name="Rebello O."/>
            <person name="Paroni F."/>
            <person name="Kelm S."/>
            <person name="Dietz F."/>
        </authorList>
    </citation>
    <scope>INTERACTION WITH HDGF</scope>
</reference>
<reference key="47">
    <citation type="journal article" date="2017" name="Nat. Struct. Mol. Biol.">
        <title>Site-specific mapping of the human SUMO proteome reveals co-modification with phosphorylation.</title>
        <authorList>
            <person name="Hendriks I.A."/>
            <person name="Lyon D."/>
            <person name="Young C."/>
            <person name="Jensen L.J."/>
            <person name="Vertegaal A.C."/>
            <person name="Nielsen M.L."/>
        </authorList>
    </citation>
    <scope>SUMOYLATION [LARGE SCALE ANALYSIS] AT LYS-324; LYS-370; LYS-377; LYS-513; LYS-577; LYS-589 AND LYS-624</scope>
    <scope>IDENTIFICATION BY MASS SPECTROMETRY [LARGE SCALE ANALYSIS]</scope>
</reference>
<reference key="48">
    <citation type="submission" date="2006-06" db="PDB data bank">
        <title>Solution structure of the RRM_1 domain of NCL protein.</title>
        <authorList>
            <consortium name="RIKEN structural genomics initiative (RSGI)"/>
        </authorList>
    </citation>
    <scope>STRUCTURE BY NMR OF 478-566</scope>
</reference>
<evidence type="ECO:0000250" key="1"/>
<evidence type="ECO:0000250" key="2">
    <source>
        <dbReference type="UniProtKB" id="P08199"/>
    </source>
</evidence>
<evidence type="ECO:0000250" key="3">
    <source>
        <dbReference type="UniProtKB" id="P09405"/>
    </source>
</evidence>
<evidence type="ECO:0000255" key="4">
    <source>
        <dbReference type="PROSITE-ProRule" id="PRU00176"/>
    </source>
</evidence>
<evidence type="ECO:0000256" key="5">
    <source>
        <dbReference type="SAM" id="MobiDB-lite"/>
    </source>
</evidence>
<evidence type="ECO:0000269" key="6">
    <source>
    </source>
</evidence>
<evidence type="ECO:0000269" key="7">
    <source>
    </source>
</evidence>
<evidence type="ECO:0000269" key="8">
    <source>
    </source>
</evidence>
<evidence type="ECO:0000269" key="9">
    <source>
    </source>
</evidence>
<evidence type="ECO:0000269" key="10">
    <source>
    </source>
</evidence>
<evidence type="ECO:0000269" key="11">
    <source>
    </source>
</evidence>
<evidence type="ECO:0000269" key="12">
    <source>
    </source>
</evidence>
<evidence type="ECO:0000269" key="13">
    <source>
    </source>
</evidence>
<evidence type="ECO:0000269" key="14">
    <source>
    </source>
</evidence>
<evidence type="ECO:0000269" key="15">
    <source>
    </source>
</evidence>
<evidence type="ECO:0000269" key="16">
    <source>
    </source>
</evidence>
<evidence type="ECO:0000269" key="17">
    <source>
    </source>
</evidence>
<evidence type="ECO:0000269" key="18">
    <source>
    </source>
</evidence>
<evidence type="ECO:0000269" key="19">
    <source>
    </source>
</evidence>
<evidence type="ECO:0000269" key="20">
    <source>
    </source>
</evidence>
<evidence type="ECO:0000269" key="21">
    <source>
    </source>
</evidence>
<evidence type="ECO:0000269" key="22">
    <source>
    </source>
</evidence>
<evidence type="ECO:0000269" key="23">
    <source>
    </source>
</evidence>
<evidence type="ECO:0000269" key="24">
    <source>
    </source>
</evidence>
<evidence type="ECO:0000269" key="25">
    <source>
    </source>
</evidence>
<evidence type="ECO:0000269" key="26">
    <source>
    </source>
</evidence>
<evidence type="ECO:0000269" key="27">
    <source>
    </source>
</evidence>
<evidence type="ECO:0000305" key="28"/>
<evidence type="ECO:0007744" key="29">
    <source>
    </source>
</evidence>
<evidence type="ECO:0007744" key="30">
    <source>
    </source>
</evidence>
<evidence type="ECO:0007744" key="31">
    <source>
    </source>
</evidence>
<evidence type="ECO:0007744" key="32">
    <source>
    </source>
</evidence>
<evidence type="ECO:0007744" key="33">
    <source>
    </source>
</evidence>
<evidence type="ECO:0007744" key="34">
    <source>
    </source>
</evidence>
<evidence type="ECO:0007744" key="35">
    <source>
    </source>
</evidence>
<evidence type="ECO:0007744" key="36">
    <source>
    </source>
</evidence>
<evidence type="ECO:0007744" key="37">
    <source>
    </source>
</evidence>
<evidence type="ECO:0007744" key="38">
    <source>
    </source>
</evidence>
<evidence type="ECO:0007744" key="39">
    <source>
    </source>
</evidence>
<evidence type="ECO:0007744" key="40">
    <source>
    </source>
</evidence>
<evidence type="ECO:0007744" key="41">
    <source>
    </source>
</evidence>
<evidence type="ECO:0007829" key="42">
    <source>
        <dbReference type="PDB" id="2FC8"/>
    </source>
</evidence>
<evidence type="ECO:0007829" key="43">
    <source>
        <dbReference type="PDB" id="2FC9"/>
    </source>
</evidence>
<evidence type="ECO:0007829" key="44">
    <source>
        <dbReference type="PDB" id="2KRR"/>
    </source>
</evidence>
<accession>P19338</accession>
<accession>Q53SK1</accession>
<accession>Q8NB06</accession>
<accession>Q9UCF0</accession>
<accession>Q9UDG1</accession>